<feature type="chain" id="PRO_1000211932" description="Large ribosomal subunit protein bL27">
    <location>
        <begin position="1"/>
        <end position="85"/>
    </location>
</feature>
<feature type="region of interest" description="Disordered" evidence="2">
    <location>
        <begin position="1"/>
        <end position="21"/>
    </location>
</feature>
<dbReference type="EMBL" id="CP001277">
    <property type="protein sequence ID" value="ACQ68869.1"/>
    <property type="molecule type" value="Genomic_DNA"/>
</dbReference>
<dbReference type="RefSeq" id="WP_015874588.1">
    <property type="nucleotide sequence ID" value="NC_012751.1"/>
</dbReference>
<dbReference type="SMR" id="C4K900"/>
<dbReference type="STRING" id="572265.HDEF_2332"/>
<dbReference type="GeneID" id="66261821"/>
<dbReference type="KEGG" id="hde:HDEF_2332"/>
<dbReference type="eggNOG" id="COG0211">
    <property type="taxonomic scope" value="Bacteria"/>
</dbReference>
<dbReference type="HOGENOM" id="CLU_095424_4_1_6"/>
<dbReference type="Proteomes" id="UP000002334">
    <property type="component" value="Chromosome"/>
</dbReference>
<dbReference type="GO" id="GO:0022625">
    <property type="term" value="C:cytosolic large ribosomal subunit"/>
    <property type="evidence" value="ECO:0007669"/>
    <property type="project" value="TreeGrafter"/>
</dbReference>
<dbReference type="GO" id="GO:0003735">
    <property type="term" value="F:structural constituent of ribosome"/>
    <property type="evidence" value="ECO:0007669"/>
    <property type="project" value="InterPro"/>
</dbReference>
<dbReference type="GO" id="GO:0006412">
    <property type="term" value="P:translation"/>
    <property type="evidence" value="ECO:0007669"/>
    <property type="project" value="UniProtKB-UniRule"/>
</dbReference>
<dbReference type="FunFam" id="2.40.50.100:FF:000001">
    <property type="entry name" value="50S ribosomal protein L27"/>
    <property type="match status" value="1"/>
</dbReference>
<dbReference type="Gene3D" id="2.40.50.100">
    <property type="match status" value="1"/>
</dbReference>
<dbReference type="HAMAP" id="MF_00539">
    <property type="entry name" value="Ribosomal_bL27"/>
    <property type="match status" value="1"/>
</dbReference>
<dbReference type="InterPro" id="IPR001684">
    <property type="entry name" value="Ribosomal_bL27"/>
</dbReference>
<dbReference type="InterPro" id="IPR018261">
    <property type="entry name" value="Ribosomal_bL27_CS"/>
</dbReference>
<dbReference type="NCBIfam" id="TIGR00062">
    <property type="entry name" value="L27"/>
    <property type="match status" value="1"/>
</dbReference>
<dbReference type="PANTHER" id="PTHR15893:SF0">
    <property type="entry name" value="LARGE RIBOSOMAL SUBUNIT PROTEIN BL27M"/>
    <property type="match status" value="1"/>
</dbReference>
<dbReference type="PANTHER" id="PTHR15893">
    <property type="entry name" value="RIBOSOMAL PROTEIN L27"/>
    <property type="match status" value="1"/>
</dbReference>
<dbReference type="Pfam" id="PF01016">
    <property type="entry name" value="Ribosomal_L27"/>
    <property type="match status" value="1"/>
</dbReference>
<dbReference type="PRINTS" id="PR00063">
    <property type="entry name" value="RIBOSOMALL27"/>
</dbReference>
<dbReference type="SUPFAM" id="SSF110324">
    <property type="entry name" value="Ribosomal L27 protein-like"/>
    <property type="match status" value="1"/>
</dbReference>
<dbReference type="PROSITE" id="PS00831">
    <property type="entry name" value="RIBOSOMAL_L27"/>
    <property type="match status" value="1"/>
</dbReference>
<protein>
    <recommendedName>
        <fullName evidence="1">Large ribosomal subunit protein bL27</fullName>
    </recommendedName>
    <alternativeName>
        <fullName evidence="3">50S ribosomal protein L27</fullName>
    </alternativeName>
</protein>
<accession>C4K900</accession>
<comment type="similarity">
    <text evidence="1">Belongs to the bacterial ribosomal protein bL27 family.</text>
</comment>
<gene>
    <name evidence="1" type="primary">rpmA</name>
    <name type="ordered locus">HDEF_2332</name>
</gene>
<name>RL27_HAMD5</name>
<organism>
    <name type="scientific">Hamiltonella defensa subsp. Acyrthosiphon pisum (strain 5AT)</name>
    <dbReference type="NCBI Taxonomy" id="572265"/>
    <lineage>
        <taxon>Bacteria</taxon>
        <taxon>Pseudomonadati</taxon>
        <taxon>Pseudomonadota</taxon>
        <taxon>Gammaproteobacteria</taxon>
        <taxon>Enterobacterales</taxon>
        <taxon>Enterobacteriaceae</taxon>
        <taxon>aphid secondary symbionts</taxon>
        <taxon>Candidatus Hamiltonella</taxon>
    </lineage>
</organism>
<sequence>MAHKKAGGSTRNGRDSEGKRLGVKRFGGEKVLAGTIIVRQRGTKFHPGVNVGCGKDHTLFALSHGKVKFEVKGTKNRSFVSIETE</sequence>
<proteinExistence type="inferred from homology"/>
<reference key="1">
    <citation type="journal article" date="2009" name="Proc. Natl. Acad. Sci. U.S.A.">
        <title>Hamiltonella defensa, genome evolution of protective bacterial endosymbiont from pathogenic ancestors.</title>
        <authorList>
            <person name="Degnan P.H."/>
            <person name="Yu Y."/>
            <person name="Sisneros N."/>
            <person name="Wing R.A."/>
            <person name="Moran N.A."/>
        </authorList>
    </citation>
    <scope>NUCLEOTIDE SEQUENCE [LARGE SCALE GENOMIC DNA]</scope>
    <source>
        <strain>5AT</strain>
    </source>
</reference>
<evidence type="ECO:0000255" key="1">
    <source>
        <dbReference type="HAMAP-Rule" id="MF_00539"/>
    </source>
</evidence>
<evidence type="ECO:0000256" key="2">
    <source>
        <dbReference type="SAM" id="MobiDB-lite"/>
    </source>
</evidence>
<evidence type="ECO:0000305" key="3"/>
<keyword id="KW-0687">Ribonucleoprotein</keyword>
<keyword id="KW-0689">Ribosomal protein</keyword>